<keyword id="KW-0021">Allosteric enzyme</keyword>
<keyword id="KW-0058">Aromatic hydrocarbons catabolism</keyword>
<keyword id="KW-0170">Cobalt</keyword>
<keyword id="KW-0456">Lyase</keyword>
<keyword id="KW-0464">Manganese</keyword>
<keyword id="KW-0479">Metal-binding</keyword>
<keyword id="KW-0533">Nickel</keyword>
<keyword id="KW-0614">Plasmid</keyword>
<keyword id="KW-1185">Reference proteome</keyword>
<feature type="chain" id="PRO_0000387928" description="4-hydroxy-2-oxovalerate aldolase">
    <location>
        <begin position="1"/>
        <end position="347"/>
    </location>
</feature>
<feature type="domain" description="Pyruvate carboxyltransferase" evidence="1">
    <location>
        <begin position="11"/>
        <end position="262"/>
    </location>
</feature>
<feature type="active site" description="Proton acceptor" evidence="1">
    <location>
        <position position="23"/>
    </location>
</feature>
<feature type="binding site" evidence="1">
    <location>
        <begin position="19"/>
        <end position="20"/>
    </location>
    <ligand>
        <name>substrate</name>
    </ligand>
</feature>
<feature type="binding site" evidence="1">
    <location>
        <position position="20"/>
    </location>
    <ligand>
        <name>Mn(2+)</name>
        <dbReference type="ChEBI" id="CHEBI:29035"/>
    </ligand>
</feature>
<feature type="binding site" evidence="1">
    <location>
        <position position="173"/>
    </location>
    <ligand>
        <name>substrate</name>
    </ligand>
</feature>
<feature type="binding site" evidence="1">
    <location>
        <position position="201"/>
    </location>
    <ligand>
        <name>Mn(2+)</name>
        <dbReference type="ChEBI" id="CHEBI:29035"/>
    </ligand>
</feature>
<feature type="binding site" evidence="1">
    <location>
        <position position="201"/>
    </location>
    <ligand>
        <name>substrate</name>
    </ligand>
</feature>
<feature type="binding site" evidence="1">
    <location>
        <position position="203"/>
    </location>
    <ligand>
        <name>Mn(2+)</name>
        <dbReference type="ChEBI" id="CHEBI:29035"/>
    </ligand>
</feature>
<feature type="binding site" evidence="1">
    <location>
        <position position="292"/>
    </location>
    <ligand>
        <name>substrate</name>
    </ligand>
</feature>
<feature type="site" description="Transition state stabilizer" evidence="1">
    <location>
        <position position="19"/>
    </location>
</feature>
<feature type="mutagenesis site" description="Increases the channeling efficiency of propanaldehyde from 57% to 94%." evidence="2">
    <original>A</original>
    <variation>G</variation>
    <location>
        <position position="324"/>
    </location>
</feature>
<reference key="1">
    <citation type="submission" date="2004-11" db="EMBL/GenBank/DDBJ databases">
        <title>Complete genome sequence of Thermus thermophilus HB8.</title>
        <authorList>
            <person name="Masui R."/>
            <person name="Kurokawa K."/>
            <person name="Nakagawa N."/>
            <person name="Tokunaga F."/>
            <person name="Koyama Y."/>
            <person name="Shibata T."/>
            <person name="Oshima T."/>
            <person name="Yokoyama S."/>
            <person name="Yasunaga T."/>
            <person name="Kuramitsu S."/>
        </authorList>
    </citation>
    <scope>NUCLEOTIDE SEQUENCE [LARGE SCALE GENOMIC DNA]</scope>
    <source>
        <strain>ATCC 27634 / DSM 579 / HB8</strain>
    </source>
</reference>
<reference key="2">
    <citation type="journal article" date="2012" name="Biochemistry">
        <title>Protein-protein interactions and substrate channeling in orthologous and chimeric aldolase-dehydrogenase complexes.</title>
        <authorList>
            <person name="Baker P."/>
            <person name="Hillis C."/>
            <person name="Carere J."/>
            <person name="Seah S.Y."/>
        </authorList>
    </citation>
    <scope>FUNCTION</scope>
    <scope>CATALYTIC ACTIVITY</scope>
    <scope>COFACTOR</scope>
    <scope>BIOPHYSICOCHEMICAL PROPERTIES</scope>
    <scope>SUBSTRATE SPECIFICITY</scope>
    <scope>ACTIVITY REGULATION</scope>
    <scope>SUBUNIT</scope>
    <scope>COMPLEX WITH TTHB247</scope>
    <scope>ALDEHYDE CHANNELING</scope>
    <scope>MUTAGENESIS OF ALA-324</scope>
    <source>
        <strain>ATCC 27634 / DSM 579 / HB8</strain>
    </source>
</reference>
<sequence length="347" mass="37214">MSWDLSTAKPPVVVDTTLRDGSHAHRHQYTVEEARAIAQALDEAGVYAIEVSHGDGLGGSSLQYGFSRTDEMELIRAVRETVRRAKVAALLLPGIGTRKELKEAVEAGIQMVRIATQCTEADISEQHFGMAKEMGLEAVGFLMMSHMRPPEFLAEQARLMEGYGADVVYIVDSAGAMLPEDAYARVKALKEALSRAKVGFHAHNNLGLAIGNTLAALAAGADWVDATLRGYGAGAGNAPLEVLAAVLDKAGLNPGLDVFKLLDAAEYVMGPILHFQPYPDRDSVAIGYAGVYSTFLLHAKRIGKELGVDPLAILLELGRRQAVAGQEDWILRVALELKEKEAGALAD</sequence>
<comment type="function">
    <text evidence="2">Catalyzes the retro-aldol cleavage of both 4-hydroxy-2-oxopentanoate (HOPA) and 4-hydroxy-2-oxohexanoate (HOHA) to pyruvate and acetaldehyde or propanaldehyde, respectively. The aldehydes produced by this reaction are directly channeled to the dehydrogenase TTHB247, ensuring that these toxic aldehydes are sequestered from cellular components. Is involved in the meta-cleavage pathway for the degradation of aromatic compounds. Appears to be stereospecific since it can cleave (4S)-4-hydroxy-2-oxopentanoate but not the (4R) isomer. Is not able to catalyze the aldol addition of 2-oxobutyrate with acetaldehyde; this indicates that the enzyme is specific for pyruvate as the carbonyl donor.</text>
</comment>
<comment type="catalytic activity">
    <reaction evidence="1 2">
        <text>(S)-4-hydroxy-2-oxopentanoate = acetaldehyde + pyruvate</text>
        <dbReference type="Rhea" id="RHEA:22624"/>
        <dbReference type="ChEBI" id="CHEBI:15343"/>
        <dbReference type="ChEBI" id="CHEBI:15361"/>
        <dbReference type="ChEBI" id="CHEBI:73143"/>
        <dbReference type="EC" id="4.1.3.39"/>
    </reaction>
</comment>
<comment type="catalytic activity">
    <reaction evidence="2">
        <text>(S)-4-hydroxy-2-oxohexanoate = propanal + pyruvate</text>
        <dbReference type="Rhea" id="RHEA:36003"/>
        <dbReference type="ChEBI" id="CHEBI:15361"/>
        <dbReference type="ChEBI" id="CHEBI:17153"/>
        <dbReference type="ChEBI" id="CHEBI:73142"/>
        <dbReference type="EC" id="4.1.3.43"/>
    </reaction>
</comment>
<comment type="cofactor">
    <cofactor evidence="2">
        <name>Co(2+)</name>
        <dbReference type="ChEBI" id="CHEBI:48828"/>
    </cofactor>
    <cofactor evidence="2">
        <name>Ni(2+)</name>
        <dbReference type="ChEBI" id="CHEBI:49786"/>
    </cofactor>
    <cofactor evidence="2">
        <name>Mn(2+)</name>
        <dbReference type="ChEBI" id="CHEBI:29035"/>
    </cofactor>
    <text evidence="2">Divalent metal cation. Has the highest activity with Co(2+) as cofactor, followed by Ni(2+) and Mn(2+). Mg(2+) and Ca(2+) are very poor metal cofactors.</text>
</comment>
<comment type="activity regulation">
    <text evidence="2">Appears to be allosterically activated by NADH.</text>
</comment>
<comment type="biophysicochemical properties">
    <kinetics>
        <KM evidence="2">206 uM for 4-hydroxy-2-oxopentanoate (in the presence of NADH at pH 8 and 25 degrees Celsius)</KM>
        <KM evidence="2">41 uM for 4-hydroxy-2-oxopentanoate (in the presence of NADH and in complex with the dehydrogenase TTHB247, at pH 8 and 25 degrees Celsius)</KM>
        <KM evidence="2">123 uM for 4-hydroxy-2-oxopentanoate (in the absence of NADH and in complex with the dehydrogenase TTHB247, at pH 8 and 25 degrees Celsius)</KM>
        <KM evidence="2">210 uM for 4-hydroxy-2-oxohexanoate (in the presence of NADH at pH 8 and 25 degrees Celsius)</KM>
        <KM evidence="2">37 uM for 4-hydroxy-2-oxopentanoate (in the presence of NADH and in complex with the dehydrogenase TTHB247, at pH 8 and 25 degrees Celsius)</KM>
        <text>The catalytic efficiency is similar when using 4-hydroxy-2-oxopentanoate or 4-hydroxy-2-oxohexanoate as substrate. In the presence of NADH, exhibits a 2-fold increase in kcat.</text>
    </kinetics>
    <temperatureDependence>
        <text evidence="2">Has a half-life of 42 hours at 50 degrees Celsius. When TTHB246 is in complex with TTHB247, its half-life is reduced by approximately 30 hours.</text>
    </temperatureDependence>
</comment>
<comment type="subunit">
    <text evidence="2">Homodimer. Can also form a heterotetramer composed of two aldolase (TTHB246) and two dehydrogenase (TTHB247) subunits. Upon complex formation, the aldolase shows a 5-fold increase in substrate affinity, while the dehydrogenase shows a 3-fold decrease; the kcat values of each enzyme are reduced by 2-fold when they are in a complex.</text>
</comment>
<comment type="similarity">
    <text evidence="1 3">Belongs to the 4-hydroxy-2-oxovalerate aldolase family.</text>
</comment>
<protein>
    <recommendedName>
        <fullName evidence="1">4-hydroxy-2-oxovalerate aldolase</fullName>
        <shortName evidence="1">HOA</shortName>
        <ecNumber evidence="1 2">4.1.3.39</ecNumber>
    </recommendedName>
    <alternativeName>
        <fullName evidence="1">4-hydroxy-2-keto-pentanoic acid aldolase</fullName>
    </alternativeName>
    <alternativeName>
        <fullName>4-hydroxy-2-oxohexanoate aldolase</fullName>
        <ecNumber evidence="2">4.1.3.43</ecNumber>
    </alternativeName>
    <alternativeName>
        <fullName evidence="1">4-hydroxy-2-oxopentanoate aldolase</fullName>
    </alternativeName>
</protein>
<proteinExistence type="evidence at protein level"/>
<evidence type="ECO:0000255" key="1">
    <source>
        <dbReference type="HAMAP-Rule" id="MF_01656"/>
    </source>
</evidence>
<evidence type="ECO:0000269" key="2">
    <source>
    </source>
</evidence>
<evidence type="ECO:0000305" key="3"/>
<organism>
    <name type="scientific">Thermus thermophilus (strain ATCC 27634 / DSM 579 / HB8)</name>
    <dbReference type="NCBI Taxonomy" id="300852"/>
    <lineage>
        <taxon>Bacteria</taxon>
        <taxon>Thermotogati</taxon>
        <taxon>Deinococcota</taxon>
        <taxon>Deinococci</taxon>
        <taxon>Thermales</taxon>
        <taxon>Thermaceae</taxon>
        <taxon>Thermus</taxon>
    </lineage>
</organism>
<dbReference type="EC" id="4.1.3.39" evidence="1 2"/>
<dbReference type="EC" id="4.1.3.43" evidence="2"/>
<dbReference type="EMBL" id="AP008227">
    <property type="protein sequence ID" value="BAD72042.1"/>
    <property type="molecule type" value="Genomic_DNA"/>
</dbReference>
<dbReference type="RefSeq" id="YP_145485.1">
    <property type="nucleotide sequence ID" value="NC_006462.1"/>
</dbReference>
<dbReference type="SMR" id="Q53WI0"/>
<dbReference type="EnsemblBacteria" id="BAD72042">
    <property type="protein sequence ID" value="BAD72042"/>
    <property type="gene ID" value="BAD72042"/>
</dbReference>
<dbReference type="GeneID" id="3169557"/>
<dbReference type="KEGG" id="ttj:TTHB246"/>
<dbReference type="PATRIC" id="fig|300852.9.peg.2202"/>
<dbReference type="HOGENOM" id="CLU_049173_0_0_0"/>
<dbReference type="PhylomeDB" id="Q53WI0"/>
<dbReference type="BRENDA" id="4.1.3.43">
    <property type="organism ID" value="2305"/>
</dbReference>
<dbReference type="SABIO-RK" id="Q53WI0"/>
<dbReference type="Proteomes" id="UP000000532">
    <property type="component" value="Plasmid pTT27"/>
</dbReference>
<dbReference type="GO" id="GO:0003852">
    <property type="term" value="F:2-isopropylmalate synthase activity"/>
    <property type="evidence" value="ECO:0007669"/>
    <property type="project" value="TreeGrafter"/>
</dbReference>
<dbReference type="GO" id="GO:0008701">
    <property type="term" value="F:4-hydroxy-2-oxovalerate aldolase activity"/>
    <property type="evidence" value="ECO:0007669"/>
    <property type="project" value="UniProtKB-UniRule"/>
</dbReference>
<dbReference type="GO" id="GO:0030145">
    <property type="term" value="F:manganese ion binding"/>
    <property type="evidence" value="ECO:0007669"/>
    <property type="project" value="UniProtKB-UniRule"/>
</dbReference>
<dbReference type="GO" id="GO:0009056">
    <property type="term" value="P:catabolic process"/>
    <property type="evidence" value="ECO:0007669"/>
    <property type="project" value="UniProtKB-KW"/>
</dbReference>
<dbReference type="GO" id="GO:0009098">
    <property type="term" value="P:L-leucine biosynthetic process"/>
    <property type="evidence" value="ECO:0007669"/>
    <property type="project" value="TreeGrafter"/>
</dbReference>
<dbReference type="CDD" id="cd07943">
    <property type="entry name" value="DRE_TIM_HOA"/>
    <property type="match status" value="1"/>
</dbReference>
<dbReference type="Gene3D" id="1.10.8.60">
    <property type="match status" value="1"/>
</dbReference>
<dbReference type="Gene3D" id="3.20.20.70">
    <property type="entry name" value="Aldolase class I"/>
    <property type="match status" value="1"/>
</dbReference>
<dbReference type="HAMAP" id="MF_01656">
    <property type="entry name" value="HOA"/>
    <property type="match status" value="1"/>
</dbReference>
<dbReference type="InterPro" id="IPR050073">
    <property type="entry name" value="2-IPM_HCS-like"/>
</dbReference>
<dbReference type="InterPro" id="IPR017629">
    <property type="entry name" value="4OH_2_O-val_aldolase"/>
</dbReference>
<dbReference type="InterPro" id="IPR013785">
    <property type="entry name" value="Aldolase_TIM"/>
</dbReference>
<dbReference type="InterPro" id="IPR012425">
    <property type="entry name" value="DmpG_comm"/>
</dbReference>
<dbReference type="InterPro" id="IPR035685">
    <property type="entry name" value="DRE_TIM_HOA"/>
</dbReference>
<dbReference type="InterPro" id="IPR000891">
    <property type="entry name" value="PYR_CT"/>
</dbReference>
<dbReference type="NCBIfam" id="TIGR03217">
    <property type="entry name" value="4OH_2_O_val_ald"/>
    <property type="match status" value="1"/>
</dbReference>
<dbReference type="NCBIfam" id="NF006049">
    <property type="entry name" value="PRK08195.1"/>
    <property type="match status" value="1"/>
</dbReference>
<dbReference type="PANTHER" id="PTHR10277:SF9">
    <property type="entry name" value="2-ISOPROPYLMALATE SYNTHASE 1, CHLOROPLASTIC-RELATED"/>
    <property type="match status" value="1"/>
</dbReference>
<dbReference type="PANTHER" id="PTHR10277">
    <property type="entry name" value="HOMOCITRATE SYNTHASE-RELATED"/>
    <property type="match status" value="1"/>
</dbReference>
<dbReference type="Pfam" id="PF07836">
    <property type="entry name" value="DmpG_comm"/>
    <property type="match status" value="1"/>
</dbReference>
<dbReference type="Pfam" id="PF00682">
    <property type="entry name" value="HMGL-like"/>
    <property type="match status" value="1"/>
</dbReference>
<dbReference type="SUPFAM" id="SSF51569">
    <property type="entry name" value="Aldolase"/>
    <property type="match status" value="1"/>
</dbReference>
<dbReference type="SUPFAM" id="SSF89000">
    <property type="entry name" value="post-HMGL domain-like"/>
    <property type="match status" value="1"/>
</dbReference>
<dbReference type="PROSITE" id="PS50991">
    <property type="entry name" value="PYR_CT"/>
    <property type="match status" value="1"/>
</dbReference>
<accession>Q53WI0</accession>
<geneLocation type="plasmid">
    <name>pTT27</name>
</geneLocation>
<gene>
    <name type="ordered locus">TTHB246</name>
</gene>
<name>HOA_THET8</name>